<proteinExistence type="inferred from homology"/>
<reference key="1">
    <citation type="journal article" date="1985" name="J. Mol. Biol.">
        <title>Nucleotide sequence and genetic organization of the genome of the N-specific filamentous bacteriophage IKe. Comparison with the genome of the F-specific filamentous phages M13, fd and f1.</title>
        <authorList>
            <person name="Peeters B.P.H."/>
            <person name="Peters R.M."/>
            <person name="Schoenmakers J.G.G."/>
            <person name="Konings R.N.H."/>
        </authorList>
    </citation>
    <scope>NUCLEOTIDE SEQUENCE [GENOMIC DNA]</scope>
</reference>
<keyword id="KW-1043">Host membrane</keyword>
<keyword id="KW-0472">Membrane</keyword>
<keyword id="KW-1185">Reference proteome</keyword>
<keyword id="KW-0812">Transmembrane</keyword>
<keyword id="KW-1133">Transmembrane helix</keyword>
<keyword id="KW-0946">Virion</keyword>
<organismHost>
    <name type="scientific">Escherichia coli</name>
    <dbReference type="NCBI Taxonomy" id="562"/>
</organismHost>
<dbReference type="EMBL" id="X02139">
    <property type="protein sequence ID" value="CAA26070.1"/>
    <property type="molecule type" value="Genomic_DNA"/>
</dbReference>
<dbReference type="PIR" id="A04278">
    <property type="entry name" value="Z7BPIK"/>
</dbReference>
<dbReference type="RefSeq" id="NP_040573.1">
    <property type="nucleotide sequence ID" value="NC_002014.1"/>
</dbReference>
<dbReference type="SMR" id="P03676"/>
<dbReference type="GeneID" id="1260887"/>
<dbReference type="KEGG" id="vg:1260887"/>
<dbReference type="Proteomes" id="UP000000372">
    <property type="component" value="Genome"/>
</dbReference>
<dbReference type="GO" id="GO:0033644">
    <property type="term" value="C:host cell membrane"/>
    <property type="evidence" value="ECO:0007669"/>
    <property type="project" value="UniProtKB-SubCell"/>
</dbReference>
<dbReference type="GO" id="GO:0016020">
    <property type="term" value="C:membrane"/>
    <property type="evidence" value="ECO:0007669"/>
    <property type="project" value="UniProtKB-KW"/>
</dbReference>
<dbReference type="GO" id="GO:0044423">
    <property type="term" value="C:virion component"/>
    <property type="evidence" value="ECO:0007669"/>
    <property type="project" value="UniProtKB-KW"/>
</dbReference>
<dbReference type="InterPro" id="IPR045539">
    <property type="entry name" value="Inovirus_G7P_2"/>
</dbReference>
<dbReference type="Pfam" id="PF19978">
    <property type="entry name" value="Inovirus_G7P_2"/>
    <property type="match status" value="1"/>
</dbReference>
<evidence type="ECO:0000250" key="1"/>
<evidence type="ECO:0000255" key="2"/>
<evidence type="ECO:0000305" key="3"/>
<organism>
    <name type="scientific">Salmonella phage IKe</name>
    <name type="common">Bacteriophage IKe</name>
    <dbReference type="NCBI Taxonomy" id="10867"/>
    <lineage>
        <taxon>Viruses</taxon>
        <taxon>Monodnaviria</taxon>
        <taxon>Loebvirae</taxon>
        <taxon>Hofneiviricota</taxon>
        <taxon>Faserviricetes</taxon>
        <taxon>Tubulavirales</taxon>
        <taxon>Inoviridae</taxon>
        <taxon>Lineavirus</taxon>
        <taxon>Lineavirus IKe</taxon>
    </lineage>
</organism>
<protein>
    <recommendedName>
        <fullName>Tail virion protein G7P</fullName>
    </recommendedName>
    <alternativeName>
        <fullName>Coat protein C, polypeptide I</fullName>
    </alternativeName>
    <alternativeName>
        <fullName>Gene 7 protein</fullName>
        <shortName>G7P</shortName>
    </alternativeName>
</protein>
<name>G7P_BPIKE</name>
<accession>P03676</accession>
<comment type="function">
    <text evidence="1">May initiate with G9P the virion concomitant assembly-budding process, by interacting with the packaging signal of the viral genome. The assembly-budding takes place at the host inner membrane. In turn, G7P and G9P are present at the end of the filamentous virion that emerges first from the bacterial host (By similarity).</text>
</comment>
<comment type="subcellular location">
    <subcellularLocation>
        <location evidence="3">Virion</location>
    </subcellularLocation>
    <subcellularLocation>
        <location evidence="3">Host membrane</location>
        <topology evidence="3">Single-pass membrane protein</topology>
    </subcellularLocation>
    <text evidence="1">Prior to assembly, is found associated with the bacterial host inner membrane. There are about five copies of this protein per mature phage that are located on the tail side of the filamentous virion with G9P (By similarity).</text>
</comment>
<comment type="similarity">
    <text evidence="3">Belongs to the inovirus G7P protein family.</text>
</comment>
<feature type="chain" id="PRO_0000098180" description="Tail virion protein G7P">
    <location>
        <begin position="1"/>
        <end position="32"/>
    </location>
</feature>
<feature type="transmembrane region" description="Helical" evidence="2">
    <location>
        <begin position="8"/>
        <end position="28"/>
    </location>
</feature>
<sequence>MSMTSDDIIYVVFALGLVVSFGLGAITAGVFR</sequence>
<gene>
    <name type="primary">VII</name>
</gene>